<name>RBM11_MOUSE</name>
<protein>
    <recommendedName>
        <fullName>Splicing regulator RBM11</fullName>
    </recommendedName>
    <alternativeName>
        <fullName>RNA-binding motif protein 11</fullName>
    </alternativeName>
</protein>
<sequence length="238" mass="26945">MFPAQEEADRTVFVGNLEARVREEILYELFLQAGPLTKVTLCKDRDGKPKSFGFVCFKHPESVSYAIALLNGIRLYGRPINVQYRFGSSRSSEPANQSFESCAKINSHSFRNDEMAGRPSFPVPFFPITSAALPQEYFFFQKMPWYAHSPVLQPPFCEMPAPLPNSVPGSCALNHSPGPEAGPSSYEWTHQPPSDPDLYPRNKRKRQRPDSDSDSSSEDKRGNEGSQKCRKCKKKKRY</sequence>
<proteinExistence type="evidence at protein level"/>
<comment type="function">
    <text evidence="1">Tissue-specific splicing factor with potential implication in the regulation of alternative splicing during neuron and germ cell differentiation. Antagonizes SRSF1-mediated BCL-X splicing. May affect the choice of alternative 5' splice sites by binding to specific sequences in exons and antagonizing the SR protein SRSF1 (By similarity).</text>
</comment>
<comment type="subunit">
    <text evidence="1">Homodimer.</text>
</comment>
<comment type="subcellular location">
    <subcellularLocation>
        <location evidence="1">Nucleus</location>
        <location evidence="1">Nucleoplasm</location>
    </subcellularLocation>
    <subcellularLocation>
        <location evidence="1">Nucleus speckle</location>
    </subcellularLocation>
    <text evidence="1">Enriched in SRSF2-containing splicing speckles; shuttles between nucleoplasm and speckles.</text>
</comment>
<comment type="tissue specificity">
    <text evidence="4">Selectively expressed in brain, cerebellum and testis, and to a lower extent in kidney.</text>
</comment>
<comment type="developmental stage">
    <text evidence="4">Peaks perinatally in brain and cerebellum, and at puberty in testis, in concomitance with differentiation events occurring in neurons and germ cells.</text>
</comment>
<comment type="sequence caution" evidence="5">
    <conflict type="erroneous initiation">
        <sequence resource="EMBL-CDS" id="EDK98269"/>
    </conflict>
    <text>Truncated N-terminus.</text>
</comment>
<feature type="chain" id="PRO_0000416116" description="Splicing regulator RBM11">
    <location>
        <begin position="1"/>
        <end position="238"/>
    </location>
</feature>
<feature type="domain" description="RRM" evidence="2">
    <location>
        <begin position="10"/>
        <end position="87"/>
    </location>
</feature>
<feature type="region of interest" description="Disordered" evidence="3">
    <location>
        <begin position="172"/>
        <end position="238"/>
    </location>
</feature>
<feature type="short sequence motif" description="Bipartite nuclear localization signal" evidence="5">
    <location>
        <begin position="202"/>
        <end position="237"/>
    </location>
</feature>
<feature type="compositionally biased region" description="Basic residues" evidence="3">
    <location>
        <begin position="228"/>
        <end position="238"/>
    </location>
</feature>
<dbReference type="EMBL" id="AC166995">
    <property type="status" value="NOT_ANNOTATED_CDS"/>
    <property type="molecule type" value="Genomic_DNA"/>
</dbReference>
<dbReference type="EMBL" id="CH466521">
    <property type="protein sequence ID" value="EDK98269.1"/>
    <property type="status" value="ALT_INIT"/>
    <property type="molecule type" value="Genomic_DNA"/>
</dbReference>
<dbReference type="EMBL" id="BC050779">
    <property type="protein sequence ID" value="AAH50779.1"/>
    <property type="molecule type" value="mRNA"/>
</dbReference>
<dbReference type="EMBL" id="AK039297">
    <property type="protein sequence ID" value="BAC30309.1"/>
    <property type="molecule type" value="mRNA"/>
</dbReference>
<dbReference type="CCDS" id="CCDS37377.1"/>
<dbReference type="RefSeq" id="NP_938044.1">
    <property type="nucleotide sequence ID" value="NM_198302.3"/>
</dbReference>
<dbReference type="SMR" id="Q80YT9"/>
<dbReference type="FunCoup" id="Q80YT9">
    <property type="interactions" value="1347"/>
</dbReference>
<dbReference type="STRING" id="10090.ENSMUSP00000109891"/>
<dbReference type="PhosphoSitePlus" id="Q80YT9"/>
<dbReference type="PaxDb" id="10090-ENSMUSP00000109887"/>
<dbReference type="ProteomicsDB" id="254997"/>
<dbReference type="Antibodypedia" id="22166">
    <property type="antibodies" value="126 antibodies from 23 providers"/>
</dbReference>
<dbReference type="DNASU" id="224344"/>
<dbReference type="Ensembl" id="ENSMUST00000046378.14">
    <property type="protein sequence ID" value="ENSMUSP00000038956.8"/>
    <property type="gene ID" value="ENSMUSG00000032940.17"/>
</dbReference>
<dbReference type="Ensembl" id="ENSMUST00000114253.2">
    <property type="protein sequence ID" value="ENSMUSP00000109891.2"/>
    <property type="gene ID" value="ENSMUSG00000032940.17"/>
</dbReference>
<dbReference type="GeneID" id="224344"/>
<dbReference type="KEGG" id="mmu:224344"/>
<dbReference type="UCSC" id="uc007zro.1">
    <property type="organism name" value="mouse"/>
</dbReference>
<dbReference type="AGR" id="MGI:2447622"/>
<dbReference type="CTD" id="54033"/>
<dbReference type="MGI" id="MGI:2447622">
    <property type="gene designation" value="Rbm11"/>
</dbReference>
<dbReference type="VEuPathDB" id="HostDB:ENSMUSG00000032940"/>
<dbReference type="eggNOG" id="ENOG502RYIT">
    <property type="taxonomic scope" value="Eukaryota"/>
</dbReference>
<dbReference type="GeneTree" id="ENSGT00870000136493"/>
<dbReference type="HOGENOM" id="CLU_1165534_0_0_1"/>
<dbReference type="InParanoid" id="Q80YT9"/>
<dbReference type="OMA" id="MQFSPIN"/>
<dbReference type="OrthoDB" id="84354at9989"/>
<dbReference type="BioGRID-ORCS" id="224344">
    <property type="hits" value="0 hits in 78 CRISPR screens"/>
</dbReference>
<dbReference type="ChiTaRS" id="Rbm11">
    <property type="organism name" value="mouse"/>
</dbReference>
<dbReference type="PRO" id="PR:Q80YT9"/>
<dbReference type="Proteomes" id="UP000000589">
    <property type="component" value="Chromosome 16"/>
</dbReference>
<dbReference type="RNAct" id="Q80YT9">
    <property type="molecule type" value="protein"/>
</dbReference>
<dbReference type="Bgee" id="ENSMUSG00000032940">
    <property type="expression patterns" value="Expressed in lumbar dorsal root ganglion and 75 other cell types or tissues"/>
</dbReference>
<dbReference type="ExpressionAtlas" id="Q80YT9">
    <property type="expression patterns" value="baseline and differential"/>
</dbReference>
<dbReference type="GO" id="GO:0016607">
    <property type="term" value="C:nuclear speck"/>
    <property type="evidence" value="ECO:0000266"/>
    <property type="project" value="MGI"/>
</dbReference>
<dbReference type="GO" id="GO:0005654">
    <property type="term" value="C:nucleoplasm"/>
    <property type="evidence" value="ECO:0000266"/>
    <property type="project" value="MGI"/>
</dbReference>
<dbReference type="GO" id="GO:0005634">
    <property type="term" value="C:nucleus"/>
    <property type="evidence" value="ECO:0000266"/>
    <property type="project" value="MGI"/>
</dbReference>
<dbReference type="GO" id="GO:0008266">
    <property type="term" value="F:poly(U) RNA binding"/>
    <property type="evidence" value="ECO:0000314"/>
    <property type="project" value="MGI"/>
</dbReference>
<dbReference type="GO" id="GO:0042803">
    <property type="term" value="F:protein homodimerization activity"/>
    <property type="evidence" value="ECO:0000266"/>
    <property type="project" value="MGI"/>
</dbReference>
<dbReference type="GO" id="GO:0030154">
    <property type="term" value="P:cell differentiation"/>
    <property type="evidence" value="ECO:0007669"/>
    <property type="project" value="UniProtKB-KW"/>
</dbReference>
<dbReference type="GO" id="GO:0034599">
    <property type="term" value="P:cellular response to oxidative stress"/>
    <property type="evidence" value="ECO:0000266"/>
    <property type="project" value="MGI"/>
</dbReference>
<dbReference type="GO" id="GO:0006397">
    <property type="term" value="P:mRNA processing"/>
    <property type="evidence" value="ECO:0007669"/>
    <property type="project" value="UniProtKB-KW"/>
</dbReference>
<dbReference type="GO" id="GO:0000381">
    <property type="term" value="P:regulation of alternative mRNA splicing, via spliceosome"/>
    <property type="evidence" value="ECO:0000266"/>
    <property type="project" value="MGI"/>
</dbReference>
<dbReference type="GO" id="GO:0008380">
    <property type="term" value="P:RNA splicing"/>
    <property type="evidence" value="ECO:0007669"/>
    <property type="project" value="UniProtKB-KW"/>
</dbReference>
<dbReference type="CDD" id="cd12593">
    <property type="entry name" value="RRM_RBM11"/>
    <property type="match status" value="1"/>
</dbReference>
<dbReference type="FunFam" id="3.30.70.330:FF:000325">
    <property type="entry name" value="splicing regulator RBM11 isoform X1"/>
    <property type="match status" value="1"/>
</dbReference>
<dbReference type="Gene3D" id="3.30.70.330">
    <property type="match status" value="1"/>
</dbReference>
<dbReference type="InterPro" id="IPR052285">
    <property type="entry name" value="NEXT_complex_subunit"/>
</dbReference>
<dbReference type="InterPro" id="IPR012677">
    <property type="entry name" value="Nucleotide-bd_a/b_plait_sf"/>
</dbReference>
<dbReference type="InterPro" id="IPR035979">
    <property type="entry name" value="RBD_domain_sf"/>
</dbReference>
<dbReference type="InterPro" id="IPR034501">
    <property type="entry name" value="RBM11_RRM"/>
</dbReference>
<dbReference type="InterPro" id="IPR000504">
    <property type="entry name" value="RRM_dom"/>
</dbReference>
<dbReference type="PANTHER" id="PTHR13798">
    <property type="entry name" value="RNA BINDING MOTIF RBM PROTEIN -RELATED"/>
    <property type="match status" value="1"/>
</dbReference>
<dbReference type="PANTHER" id="PTHR13798:SF5">
    <property type="entry name" value="SPLICING REGULATOR RBM11"/>
    <property type="match status" value="1"/>
</dbReference>
<dbReference type="Pfam" id="PF00076">
    <property type="entry name" value="RRM_1"/>
    <property type="match status" value="1"/>
</dbReference>
<dbReference type="SMART" id="SM00360">
    <property type="entry name" value="RRM"/>
    <property type="match status" value="1"/>
</dbReference>
<dbReference type="SUPFAM" id="SSF54928">
    <property type="entry name" value="RNA-binding domain, RBD"/>
    <property type="match status" value="1"/>
</dbReference>
<dbReference type="PROSITE" id="PS50102">
    <property type="entry name" value="RRM"/>
    <property type="match status" value="1"/>
</dbReference>
<evidence type="ECO:0000250" key="1"/>
<evidence type="ECO:0000255" key="2">
    <source>
        <dbReference type="PROSITE-ProRule" id="PRU00176"/>
    </source>
</evidence>
<evidence type="ECO:0000256" key="3">
    <source>
        <dbReference type="SAM" id="MobiDB-lite"/>
    </source>
</evidence>
<evidence type="ECO:0000269" key="4">
    <source>
    </source>
</evidence>
<evidence type="ECO:0000305" key="5"/>
<reference key="1">
    <citation type="journal article" date="2009" name="PLoS Biol.">
        <title>Lineage-specific biology revealed by a finished genome assembly of the mouse.</title>
        <authorList>
            <person name="Church D.M."/>
            <person name="Goodstadt L."/>
            <person name="Hillier L.W."/>
            <person name="Zody M.C."/>
            <person name="Goldstein S."/>
            <person name="She X."/>
            <person name="Bult C.J."/>
            <person name="Agarwala R."/>
            <person name="Cherry J.L."/>
            <person name="DiCuccio M."/>
            <person name="Hlavina W."/>
            <person name="Kapustin Y."/>
            <person name="Meric P."/>
            <person name="Maglott D."/>
            <person name="Birtle Z."/>
            <person name="Marques A.C."/>
            <person name="Graves T."/>
            <person name="Zhou S."/>
            <person name="Teague B."/>
            <person name="Potamousis K."/>
            <person name="Churas C."/>
            <person name="Place M."/>
            <person name="Herschleb J."/>
            <person name="Runnheim R."/>
            <person name="Forrest D."/>
            <person name="Amos-Landgraf J."/>
            <person name="Schwartz D.C."/>
            <person name="Cheng Z."/>
            <person name="Lindblad-Toh K."/>
            <person name="Eichler E.E."/>
            <person name="Ponting C.P."/>
        </authorList>
    </citation>
    <scope>NUCLEOTIDE SEQUENCE [LARGE SCALE GENOMIC DNA]</scope>
    <source>
        <strain>C57BL/6J</strain>
    </source>
</reference>
<reference key="2">
    <citation type="submission" date="2005-07" db="EMBL/GenBank/DDBJ databases">
        <authorList>
            <person name="Mural R.J."/>
            <person name="Adams M.D."/>
            <person name="Myers E.W."/>
            <person name="Smith H.O."/>
            <person name="Venter J.C."/>
        </authorList>
    </citation>
    <scope>NUCLEOTIDE SEQUENCE [LARGE SCALE GENOMIC DNA]</scope>
</reference>
<reference key="3">
    <citation type="journal article" date="2004" name="Genome Res.">
        <title>The status, quality, and expansion of the NIH full-length cDNA project: the Mammalian Gene Collection (MGC).</title>
        <authorList>
            <consortium name="The MGC Project Team"/>
        </authorList>
    </citation>
    <scope>NUCLEOTIDE SEQUENCE [LARGE SCALE MRNA]</scope>
    <source>
        <tissue>Testis</tissue>
    </source>
</reference>
<reference key="4">
    <citation type="journal article" date="2005" name="Science">
        <title>The transcriptional landscape of the mammalian genome.</title>
        <authorList>
            <person name="Carninci P."/>
            <person name="Kasukawa T."/>
            <person name="Katayama S."/>
            <person name="Gough J."/>
            <person name="Frith M.C."/>
            <person name="Maeda N."/>
            <person name="Oyama R."/>
            <person name="Ravasi T."/>
            <person name="Lenhard B."/>
            <person name="Wells C."/>
            <person name="Kodzius R."/>
            <person name="Shimokawa K."/>
            <person name="Bajic V.B."/>
            <person name="Brenner S.E."/>
            <person name="Batalov S."/>
            <person name="Forrest A.R."/>
            <person name="Zavolan M."/>
            <person name="Davis M.J."/>
            <person name="Wilming L.G."/>
            <person name="Aidinis V."/>
            <person name="Allen J.E."/>
            <person name="Ambesi-Impiombato A."/>
            <person name="Apweiler R."/>
            <person name="Aturaliya R.N."/>
            <person name="Bailey T.L."/>
            <person name="Bansal M."/>
            <person name="Baxter L."/>
            <person name="Beisel K.W."/>
            <person name="Bersano T."/>
            <person name="Bono H."/>
            <person name="Chalk A.M."/>
            <person name="Chiu K.P."/>
            <person name="Choudhary V."/>
            <person name="Christoffels A."/>
            <person name="Clutterbuck D.R."/>
            <person name="Crowe M.L."/>
            <person name="Dalla E."/>
            <person name="Dalrymple B.P."/>
            <person name="de Bono B."/>
            <person name="Della Gatta G."/>
            <person name="di Bernardo D."/>
            <person name="Down T."/>
            <person name="Engstrom P."/>
            <person name="Fagiolini M."/>
            <person name="Faulkner G."/>
            <person name="Fletcher C.F."/>
            <person name="Fukushima T."/>
            <person name="Furuno M."/>
            <person name="Futaki S."/>
            <person name="Gariboldi M."/>
            <person name="Georgii-Hemming P."/>
            <person name="Gingeras T.R."/>
            <person name="Gojobori T."/>
            <person name="Green R.E."/>
            <person name="Gustincich S."/>
            <person name="Harbers M."/>
            <person name="Hayashi Y."/>
            <person name="Hensch T.K."/>
            <person name="Hirokawa N."/>
            <person name="Hill D."/>
            <person name="Huminiecki L."/>
            <person name="Iacono M."/>
            <person name="Ikeo K."/>
            <person name="Iwama A."/>
            <person name="Ishikawa T."/>
            <person name="Jakt M."/>
            <person name="Kanapin A."/>
            <person name="Katoh M."/>
            <person name="Kawasawa Y."/>
            <person name="Kelso J."/>
            <person name="Kitamura H."/>
            <person name="Kitano H."/>
            <person name="Kollias G."/>
            <person name="Krishnan S.P."/>
            <person name="Kruger A."/>
            <person name="Kummerfeld S.K."/>
            <person name="Kurochkin I.V."/>
            <person name="Lareau L.F."/>
            <person name="Lazarevic D."/>
            <person name="Lipovich L."/>
            <person name="Liu J."/>
            <person name="Liuni S."/>
            <person name="McWilliam S."/>
            <person name="Madan Babu M."/>
            <person name="Madera M."/>
            <person name="Marchionni L."/>
            <person name="Matsuda H."/>
            <person name="Matsuzawa S."/>
            <person name="Miki H."/>
            <person name="Mignone F."/>
            <person name="Miyake S."/>
            <person name="Morris K."/>
            <person name="Mottagui-Tabar S."/>
            <person name="Mulder N."/>
            <person name="Nakano N."/>
            <person name="Nakauchi H."/>
            <person name="Ng P."/>
            <person name="Nilsson R."/>
            <person name="Nishiguchi S."/>
            <person name="Nishikawa S."/>
            <person name="Nori F."/>
            <person name="Ohara O."/>
            <person name="Okazaki Y."/>
            <person name="Orlando V."/>
            <person name="Pang K.C."/>
            <person name="Pavan W.J."/>
            <person name="Pavesi G."/>
            <person name="Pesole G."/>
            <person name="Petrovsky N."/>
            <person name="Piazza S."/>
            <person name="Reed J."/>
            <person name="Reid J.F."/>
            <person name="Ring B.Z."/>
            <person name="Ringwald M."/>
            <person name="Rost B."/>
            <person name="Ruan Y."/>
            <person name="Salzberg S.L."/>
            <person name="Sandelin A."/>
            <person name="Schneider C."/>
            <person name="Schoenbach C."/>
            <person name="Sekiguchi K."/>
            <person name="Semple C.A."/>
            <person name="Seno S."/>
            <person name="Sessa L."/>
            <person name="Sheng Y."/>
            <person name="Shibata Y."/>
            <person name="Shimada H."/>
            <person name="Shimada K."/>
            <person name="Silva D."/>
            <person name="Sinclair B."/>
            <person name="Sperling S."/>
            <person name="Stupka E."/>
            <person name="Sugiura K."/>
            <person name="Sultana R."/>
            <person name="Takenaka Y."/>
            <person name="Taki K."/>
            <person name="Tammoja K."/>
            <person name="Tan S.L."/>
            <person name="Tang S."/>
            <person name="Taylor M.S."/>
            <person name="Tegner J."/>
            <person name="Teichmann S.A."/>
            <person name="Ueda H.R."/>
            <person name="van Nimwegen E."/>
            <person name="Verardo R."/>
            <person name="Wei C.L."/>
            <person name="Yagi K."/>
            <person name="Yamanishi H."/>
            <person name="Zabarovsky E."/>
            <person name="Zhu S."/>
            <person name="Zimmer A."/>
            <person name="Hide W."/>
            <person name="Bult C."/>
            <person name="Grimmond S.M."/>
            <person name="Teasdale R.D."/>
            <person name="Liu E.T."/>
            <person name="Brusic V."/>
            <person name="Quackenbush J."/>
            <person name="Wahlestedt C."/>
            <person name="Mattick J.S."/>
            <person name="Hume D.A."/>
            <person name="Kai C."/>
            <person name="Sasaki D."/>
            <person name="Tomaru Y."/>
            <person name="Fukuda S."/>
            <person name="Kanamori-Katayama M."/>
            <person name="Suzuki M."/>
            <person name="Aoki J."/>
            <person name="Arakawa T."/>
            <person name="Iida J."/>
            <person name="Imamura K."/>
            <person name="Itoh M."/>
            <person name="Kato T."/>
            <person name="Kawaji H."/>
            <person name="Kawagashira N."/>
            <person name="Kawashima T."/>
            <person name="Kojima M."/>
            <person name="Kondo S."/>
            <person name="Konno H."/>
            <person name="Nakano K."/>
            <person name="Ninomiya N."/>
            <person name="Nishio T."/>
            <person name="Okada M."/>
            <person name="Plessy C."/>
            <person name="Shibata K."/>
            <person name="Shiraki T."/>
            <person name="Suzuki S."/>
            <person name="Tagami M."/>
            <person name="Waki K."/>
            <person name="Watahiki A."/>
            <person name="Okamura-Oho Y."/>
            <person name="Suzuki H."/>
            <person name="Kawai J."/>
            <person name="Hayashizaki Y."/>
        </authorList>
    </citation>
    <scope>NUCLEOTIDE SEQUENCE [LARGE SCALE MRNA] OF 2-238</scope>
    <source>
        <strain>C57BL/6J</strain>
        <tissue>Spinal cord</tissue>
    </source>
</reference>
<reference key="5">
    <citation type="journal article" date="2012" name="Nucleic Acids Res.">
        <title>The RNA recognition motif protein RBM11 is a novel tissue-specific splicing regulator.</title>
        <authorList>
            <person name="Pedrotti S."/>
            <person name="Busa R."/>
            <person name="Compagnucci C."/>
            <person name="Sette C."/>
        </authorList>
    </citation>
    <scope>TISSUE SPECIFICITY</scope>
    <scope>RNA-BINDING</scope>
    <scope>DEVELOPMENTAL STAGE</scope>
</reference>
<organism>
    <name type="scientific">Mus musculus</name>
    <name type="common">Mouse</name>
    <dbReference type="NCBI Taxonomy" id="10090"/>
    <lineage>
        <taxon>Eukaryota</taxon>
        <taxon>Metazoa</taxon>
        <taxon>Chordata</taxon>
        <taxon>Craniata</taxon>
        <taxon>Vertebrata</taxon>
        <taxon>Euteleostomi</taxon>
        <taxon>Mammalia</taxon>
        <taxon>Eutheria</taxon>
        <taxon>Euarchontoglires</taxon>
        <taxon>Glires</taxon>
        <taxon>Rodentia</taxon>
        <taxon>Myomorpha</taxon>
        <taxon>Muroidea</taxon>
        <taxon>Muridae</taxon>
        <taxon>Murinae</taxon>
        <taxon>Mus</taxon>
        <taxon>Mus</taxon>
    </lineage>
</organism>
<gene>
    <name type="primary">Rbm11</name>
</gene>
<accession>Q80YT9</accession>
<accession>D3Z0X9</accession>
<accession>Q8BYK1</accession>
<keyword id="KW-0217">Developmental protein</keyword>
<keyword id="KW-0221">Differentiation</keyword>
<keyword id="KW-0507">mRNA processing</keyword>
<keyword id="KW-0508">mRNA splicing</keyword>
<keyword id="KW-0539">Nucleus</keyword>
<keyword id="KW-1185">Reference proteome</keyword>
<keyword id="KW-0694">RNA-binding</keyword>